<feature type="chain" id="PRO_0000259477" description="Phosphoenolpyruvate transferase">
    <location>
        <begin position="1"/>
        <end position="322"/>
    </location>
</feature>
<feature type="binding site" evidence="1">
    <location>
        <position position="58"/>
    </location>
    <ligand>
        <name>7,8-didemethyl-8-hydroxy-5-deazariboflavin</name>
        <dbReference type="ChEBI" id="CHEBI:59904"/>
    </ligand>
</feature>
<sequence length="322" mass="34335">MRIVVLAGGIGGARFLRGLKDALHHRAEQGESPSSITVIGNTGDDITLFGLRVCPDLDTVMYTLGGGINEEQGWGRADETFTVREELIAYGMHPQWFGLGDRDIATHIVRSQMLAAGYPLSAITEALCDRWKPGVRLLPMTDDQVETHVVVADEKGRRAIHFQEWWVRYRAQIPAESFVSVGADSAKPAPGVLSAIDEADFVLFPPSNPVVSIGSILGIPGIRDAVAAKTVVGVSPIIGGAPVRGMADACLRTIGVETSARAVAEHYGADLLDGWLVDEADADTVVAGVEVRAMPLYMSDPERTAAIAGAAVDLALELKERS</sequence>
<gene>
    <name evidence="1" type="primary">fbiA</name>
    <name type="ordered locus">Tfu_2517</name>
</gene>
<dbReference type="EC" id="2.7.8.28" evidence="1"/>
<dbReference type="EMBL" id="CP000088">
    <property type="protein sequence ID" value="AAZ56550.1"/>
    <property type="status" value="ALT_INIT"/>
    <property type="molecule type" value="Genomic_DNA"/>
</dbReference>
<dbReference type="SMR" id="Q47LX2"/>
<dbReference type="STRING" id="269800.Tfu_2517"/>
<dbReference type="KEGG" id="tfu:Tfu_2517"/>
<dbReference type="eggNOG" id="COG0391">
    <property type="taxonomic scope" value="Bacteria"/>
</dbReference>
<dbReference type="HOGENOM" id="CLU_055795_0_0_11"/>
<dbReference type="OrthoDB" id="7466225at2"/>
<dbReference type="UniPathway" id="UPA00071"/>
<dbReference type="GO" id="GO:0043743">
    <property type="term" value="F:LPPG:FO 2-phospho-L-lactate transferase activity"/>
    <property type="evidence" value="ECO:0007669"/>
    <property type="project" value="UniProtKB-EC"/>
</dbReference>
<dbReference type="GO" id="GO:0000287">
    <property type="term" value="F:magnesium ion binding"/>
    <property type="evidence" value="ECO:0007669"/>
    <property type="project" value="InterPro"/>
</dbReference>
<dbReference type="CDD" id="cd07186">
    <property type="entry name" value="CofD_like"/>
    <property type="match status" value="1"/>
</dbReference>
<dbReference type="FunFam" id="1.10.8.240:FF:000001">
    <property type="entry name" value="2-phospho-L-lactate transferase"/>
    <property type="match status" value="1"/>
</dbReference>
<dbReference type="Gene3D" id="1.10.8.240">
    <property type="entry name" value="CofD-like domain"/>
    <property type="match status" value="1"/>
</dbReference>
<dbReference type="Gene3D" id="3.40.50.10680">
    <property type="entry name" value="CofD-like domains"/>
    <property type="match status" value="1"/>
</dbReference>
<dbReference type="HAMAP" id="MF_01257">
    <property type="entry name" value="CofD"/>
    <property type="match status" value="1"/>
</dbReference>
<dbReference type="InterPro" id="IPR002882">
    <property type="entry name" value="CofD"/>
</dbReference>
<dbReference type="InterPro" id="IPR038136">
    <property type="entry name" value="CofD-like_dom_sf"/>
</dbReference>
<dbReference type="InterPro" id="IPR010115">
    <property type="entry name" value="FbiA/CofD"/>
</dbReference>
<dbReference type="NCBIfam" id="TIGR01819">
    <property type="entry name" value="F420_cofD"/>
    <property type="match status" value="1"/>
</dbReference>
<dbReference type="PANTHER" id="PTHR43007">
    <property type="entry name" value="2-PHOSPHO-L-LACTATE TRANSFERASE"/>
    <property type="match status" value="1"/>
</dbReference>
<dbReference type="PANTHER" id="PTHR43007:SF1">
    <property type="entry name" value="2-PHOSPHO-L-LACTATE TRANSFERASE"/>
    <property type="match status" value="1"/>
</dbReference>
<dbReference type="Pfam" id="PF01933">
    <property type="entry name" value="CofD"/>
    <property type="match status" value="1"/>
</dbReference>
<dbReference type="SUPFAM" id="SSF142338">
    <property type="entry name" value="CofD-like"/>
    <property type="match status" value="1"/>
</dbReference>
<organism>
    <name type="scientific">Thermobifida fusca (strain YX)</name>
    <dbReference type="NCBI Taxonomy" id="269800"/>
    <lineage>
        <taxon>Bacteria</taxon>
        <taxon>Bacillati</taxon>
        <taxon>Actinomycetota</taxon>
        <taxon>Actinomycetes</taxon>
        <taxon>Streptosporangiales</taxon>
        <taxon>Nocardiopsidaceae</taxon>
        <taxon>Thermobifida</taxon>
    </lineage>
</organism>
<reference key="1">
    <citation type="journal article" date="2007" name="J. Bacteriol.">
        <title>Genome sequence and analysis of the soil cellulolytic actinomycete Thermobifida fusca YX.</title>
        <authorList>
            <person name="Lykidis A."/>
            <person name="Mavromatis K."/>
            <person name="Ivanova N."/>
            <person name="Anderson I."/>
            <person name="Land M."/>
            <person name="DiBartolo G."/>
            <person name="Martinez M."/>
            <person name="Lapidus A."/>
            <person name="Lucas S."/>
            <person name="Copeland A."/>
            <person name="Richardson P."/>
            <person name="Wilson D.B."/>
            <person name="Kyrpides N."/>
        </authorList>
    </citation>
    <scope>NUCLEOTIDE SEQUENCE [LARGE SCALE GENOMIC DNA]</scope>
    <source>
        <strain>YX</strain>
    </source>
</reference>
<proteinExistence type="inferred from homology"/>
<evidence type="ECO:0000255" key="1">
    <source>
        <dbReference type="HAMAP-Rule" id="MF_01257"/>
    </source>
</evidence>
<evidence type="ECO:0000305" key="2"/>
<accession>Q47LX2</accession>
<protein>
    <recommendedName>
        <fullName evidence="1">Phosphoenolpyruvate transferase</fullName>
        <ecNumber evidence="1">2.7.8.28</ecNumber>
    </recommendedName>
    <alternativeName>
        <fullName evidence="1">EPPG:FO PEP transferase</fullName>
    </alternativeName>
</protein>
<name>FBIA_THEFY</name>
<keyword id="KW-0460">Magnesium</keyword>
<keyword id="KW-0808">Transferase</keyword>
<comment type="function">
    <text evidence="1">Catalyzes the transfer of the phosphoenolpyruvate moiety from enoylpyruvoyl-2-diphospho-5'-guanosine (EPPG) to 7,8-didemethyl-8-hydroxy-5-deazariboflavin (FO) with the formation of dehydro coenzyme F420-0 and GMP.</text>
</comment>
<comment type="catalytic activity">
    <reaction evidence="1">
        <text>enolpyruvoyl-2-diphospho-5'-guanosine + 7,8-didemethyl-8-hydroxy-5-deazariboflavin = dehydro coenzyme F420-0 + GMP + H(+)</text>
        <dbReference type="Rhea" id="RHEA:27510"/>
        <dbReference type="ChEBI" id="CHEBI:15378"/>
        <dbReference type="ChEBI" id="CHEBI:58115"/>
        <dbReference type="ChEBI" id="CHEBI:59904"/>
        <dbReference type="ChEBI" id="CHEBI:143701"/>
        <dbReference type="ChEBI" id="CHEBI:143705"/>
        <dbReference type="EC" id="2.7.8.28"/>
    </reaction>
</comment>
<comment type="cofactor">
    <cofactor evidence="1">
        <name>Mg(2+)</name>
        <dbReference type="ChEBI" id="CHEBI:18420"/>
    </cofactor>
</comment>
<comment type="pathway">
    <text evidence="1">Cofactor biosynthesis; coenzyme F420 biosynthesis.</text>
</comment>
<comment type="subunit">
    <text evidence="1">Homodimer.</text>
</comment>
<comment type="similarity">
    <text evidence="1">Belongs to the CofD family.</text>
</comment>
<comment type="sequence caution" evidence="2">
    <conflict type="erroneous initiation">
        <sequence resource="EMBL-CDS" id="AAZ56550"/>
    </conflict>
</comment>